<dbReference type="EMBL" id="CP000803">
    <property type="protein sequence ID" value="ABU62015.1"/>
    <property type="molecule type" value="Genomic_DNA"/>
</dbReference>
<dbReference type="RefSeq" id="WP_003016753.1">
    <property type="nucleotide sequence ID" value="NC_009749.1"/>
</dbReference>
<dbReference type="SMR" id="A7NDG2"/>
<dbReference type="GeneID" id="75263828"/>
<dbReference type="KEGG" id="fta:FTA_1540"/>
<dbReference type="HOGENOM" id="CLU_061463_3_2_6"/>
<dbReference type="GO" id="GO:0005737">
    <property type="term" value="C:cytoplasm"/>
    <property type="evidence" value="ECO:0007669"/>
    <property type="project" value="UniProtKB-ARBA"/>
</dbReference>
<dbReference type="GO" id="GO:1990904">
    <property type="term" value="C:ribonucleoprotein complex"/>
    <property type="evidence" value="ECO:0007669"/>
    <property type="project" value="UniProtKB-KW"/>
</dbReference>
<dbReference type="GO" id="GO:0005840">
    <property type="term" value="C:ribosome"/>
    <property type="evidence" value="ECO:0007669"/>
    <property type="project" value="UniProtKB-KW"/>
</dbReference>
<dbReference type="GO" id="GO:0019843">
    <property type="term" value="F:rRNA binding"/>
    <property type="evidence" value="ECO:0007669"/>
    <property type="project" value="UniProtKB-UniRule"/>
</dbReference>
<dbReference type="GO" id="GO:0003735">
    <property type="term" value="F:structural constituent of ribosome"/>
    <property type="evidence" value="ECO:0007669"/>
    <property type="project" value="InterPro"/>
</dbReference>
<dbReference type="GO" id="GO:0006412">
    <property type="term" value="P:translation"/>
    <property type="evidence" value="ECO:0007669"/>
    <property type="project" value="UniProtKB-UniRule"/>
</dbReference>
<dbReference type="HAMAP" id="MF_01363">
    <property type="entry name" value="Ribosomal_bL21"/>
    <property type="match status" value="1"/>
</dbReference>
<dbReference type="InterPro" id="IPR028909">
    <property type="entry name" value="bL21-like"/>
</dbReference>
<dbReference type="InterPro" id="IPR036164">
    <property type="entry name" value="bL21-like_sf"/>
</dbReference>
<dbReference type="InterPro" id="IPR001787">
    <property type="entry name" value="Ribosomal_bL21"/>
</dbReference>
<dbReference type="InterPro" id="IPR018258">
    <property type="entry name" value="Ribosomal_bL21_CS"/>
</dbReference>
<dbReference type="NCBIfam" id="TIGR00061">
    <property type="entry name" value="L21"/>
    <property type="match status" value="1"/>
</dbReference>
<dbReference type="PANTHER" id="PTHR21349">
    <property type="entry name" value="50S RIBOSOMAL PROTEIN L21"/>
    <property type="match status" value="1"/>
</dbReference>
<dbReference type="PANTHER" id="PTHR21349:SF0">
    <property type="entry name" value="LARGE RIBOSOMAL SUBUNIT PROTEIN BL21M"/>
    <property type="match status" value="1"/>
</dbReference>
<dbReference type="Pfam" id="PF00829">
    <property type="entry name" value="Ribosomal_L21p"/>
    <property type="match status" value="1"/>
</dbReference>
<dbReference type="SUPFAM" id="SSF141091">
    <property type="entry name" value="L21p-like"/>
    <property type="match status" value="1"/>
</dbReference>
<dbReference type="PROSITE" id="PS01169">
    <property type="entry name" value="RIBOSOMAL_L21"/>
    <property type="match status" value="1"/>
</dbReference>
<proteinExistence type="inferred from homology"/>
<evidence type="ECO:0000255" key="1">
    <source>
        <dbReference type="HAMAP-Rule" id="MF_01363"/>
    </source>
</evidence>
<evidence type="ECO:0000305" key="2"/>
<reference key="1">
    <citation type="journal article" date="2009" name="PLoS ONE">
        <title>Complete genome sequence of Francisella tularensis subspecies holarctica FTNF002-00.</title>
        <authorList>
            <person name="Barabote R.D."/>
            <person name="Xie G."/>
            <person name="Brettin T.S."/>
            <person name="Hinrichs S.H."/>
            <person name="Fey P.D."/>
            <person name="Jay J.J."/>
            <person name="Engle J.L."/>
            <person name="Godbole S.D."/>
            <person name="Noronha J.M."/>
            <person name="Scheuermann R.H."/>
            <person name="Zhou L.W."/>
            <person name="Lion C."/>
            <person name="Dempsey M.P."/>
        </authorList>
    </citation>
    <scope>NUCLEOTIDE SEQUENCE [LARGE SCALE GENOMIC DNA]</scope>
    <source>
        <strain>FTNF002-00 / FTA</strain>
    </source>
</reference>
<protein>
    <recommendedName>
        <fullName evidence="1">Large ribosomal subunit protein bL21</fullName>
    </recommendedName>
    <alternativeName>
        <fullName evidence="2">50S ribosomal protein L21</fullName>
    </alternativeName>
</protein>
<gene>
    <name evidence="1" type="primary">rplU</name>
    <name type="ordered locus">FTA_1540</name>
</gene>
<keyword id="KW-0687">Ribonucleoprotein</keyword>
<keyword id="KW-0689">Ribosomal protein</keyword>
<keyword id="KW-0694">RNA-binding</keyword>
<keyword id="KW-0699">rRNA-binding</keyword>
<name>RL21_FRATF</name>
<comment type="function">
    <text evidence="1">This protein binds to 23S rRNA in the presence of protein L20.</text>
</comment>
<comment type="subunit">
    <text evidence="1">Part of the 50S ribosomal subunit. Contacts protein L20.</text>
</comment>
<comment type="similarity">
    <text evidence="1">Belongs to the bacterial ribosomal protein bL21 family.</text>
</comment>
<organism>
    <name type="scientific">Francisella tularensis subsp. holarctica (strain FTNF002-00 / FTA)</name>
    <dbReference type="NCBI Taxonomy" id="458234"/>
    <lineage>
        <taxon>Bacteria</taxon>
        <taxon>Pseudomonadati</taxon>
        <taxon>Pseudomonadota</taxon>
        <taxon>Gammaproteobacteria</taxon>
        <taxon>Thiotrichales</taxon>
        <taxon>Francisellaceae</taxon>
        <taxon>Francisella</taxon>
    </lineage>
</organism>
<accession>A7NDG2</accession>
<feature type="chain" id="PRO_1000067834" description="Large ribosomal subunit protein bL21">
    <location>
        <begin position="1"/>
        <end position="104"/>
    </location>
</feature>
<sequence>MYAIIKNGGKQYKVKEGEVVKLEKFDLGIGEKVEFDTVLMGQTAAGEVKIGAPTVAGAKVVGEVVEQGRHKKVKIMKFRRRKHSMKQQGHRQYFTAVKVSSISL</sequence>